<sequence>MEAESGSSTSQDSLASLTAGDVLVRSTGVRGVKGAAGAGGRNSAAVSVTKLREALPSRQAAGVALSRGETPCEPPVPSSGASNGRVTGVTACSAAPGVWNAKGHPEHLLLVADPVEATSVPQMVYPKEAAVNPKEADRSLQPEYSRRPKDDVLISRYPTGQKEALRAVLKQKTRSAPVFKEVKVQLLGNASPERKESVGQDPILTHREADSATTIAAATAAAIATTAPLLKVQNDLQAKVNCVSTLLHKLQETDKQLQRVAEQQTNTKTQHEKPHCHERVSELEKQMNAFMLQRIHHLEKLQEHQMNIQSHFISSAVNMGGLQQTHMPSSGLLTKQSEKAEEQLLNNGISSSQKNFFPSSGLPTQGDGRHLEHILNPQAAPWGQMESSEKTMLTNDKMSWHSEIERPTALQTDSCPAYENSSQNCNSIEKTVKKADDLLQVLGQLRKEMHDMLQEASSWKSDMNDLIKSKPATIASDPPEYNHLVKPSVLQNVKAPNSILSDAKRVLREVQSRKKVLEENLEAVLRAKGGGAMSAFINALTTNRDALEKIRIRKAVDERIKAISAEIQAEMARNDMEQVKYDQKVPWIKRAQNIKAMKNSKEIKAKTQKIQGCSTKKPLSAAKSLRNHVEDNISKEGFRTYFSSESLQRNRKGTDEPMSGCAMVQNEEYLSQIYGKPIYQGHRSTLKKAPYLRFNSPSPKSKLQRPRVIEYVRGTKVKSAGTQTCSRAQKAVISSKKQHPLYALAQENQYFFSPNRDVPADCGPLEGHLIPMAVPLGQTQINDISVQPAGVVMCKPHPVTVTTSIPQVPPKPPTEVKKPNVAVIEMRSEKKDPPQLSVQVLPNVDIDSISGGSVSVNHVLPEPKPARCPADAVIQAPEDIQSEEEDVKFPGTNFTDVTDVVQDQEEERDEIPEFTEPLLEINGHFRVAEPTYNGPSFPPVASAPQQSCDVLDEWIERRETIENRLINWVEQEIMAKIISEMYPVQRETVPSVSTSEGEDSETVTSDIVEAAGGGGFQLFIDAGVPVDSEMISHLVNEVLSETIATMLGNRQAQEAVPATNLLPSTTAVMEPLVPTPLPTPQATPPQTPPSEKEMPPVQTPESSPSITELSGDVREQEKMKEAGSDIPAAVSRVGTPVITPISTPPEIITPSPPASEAAKMENPAPLNPWDDAELPLEEEKPSPLAEETFNPKAVEMSVANDEEPEALILPSWQSSPKPFQSLPCEPEAPSAAPTDSSEQSTQESSLTPTETETADRPISEGEVLFSCDQMLAAREGGLSFPNLTESLTSTLQDANEMDYDPPSEGQVVRRSHKGYHRDPVLALLAKLNQAPVAVQEGGYHLEDSDSSVGELSEGQRPRLTRAAERILMGHPVDIDHATARASEDRPYQGSRSPSPGQLTHPAEILGDADTSHGPMLVAELESQPISNPVLQAAQPSCRVASLPKGPSQEESQGDARVVRPRVVHVRRKSEEMQEEGEGVVPHFHSHVSAERMSVKLPSMNIDDQTQSLSSIHGDSDSSGADTF</sequence>
<feature type="chain" id="PRO_0000420182" description="TALPID3 protein">
    <location>
        <begin position="1"/>
        <end position="1523"/>
    </location>
</feature>
<feature type="region of interest" description="Disordered" evidence="2">
    <location>
        <begin position="1"/>
        <end position="20"/>
    </location>
</feature>
<feature type="region of interest" description="Disordered" evidence="2">
    <location>
        <begin position="57"/>
        <end position="84"/>
    </location>
</feature>
<feature type="region of interest" description="Required for centrosomal localization">
    <location>
        <begin position="498"/>
        <end position="585"/>
    </location>
</feature>
<feature type="region of interest" description="Disordered" evidence="2">
    <location>
        <begin position="1070"/>
        <end position="1112"/>
    </location>
</feature>
<feature type="region of interest" description="Disordered" evidence="2">
    <location>
        <begin position="1137"/>
        <end position="1262"/>
    </location>
</feature>
<feature type="region of interest" description="Disordered" evidence="2">
    <location>
        <begin position="1294"/>
        <end position="1313"/>
    </location>
</feature>
<feature type="region of interest" description="Disordered" evidence="2">
    <location>
        <begin position="1373"/>
        <end position="1410"/>
    </location>
</feature>
<feature type="region of interest" description="Disordered" evidence="2">
    <location>
        <begin position="1498"/>
        <end position="1523"/>
    </location>
</feature>
<feature type="coiled-coil region" evidence="1">
    <location>
        <begin position="428"/>
        <end position="466"/>
    </location>
</feature>
<feature type="coiled-coil region" evidence="1">
    <location>
        <begin position="499"/>
        <end position="528"/>
    </location>
</feature>
<feature type="compositionally biased region" description="Polar residues" evidence="2">
    <location>
        <begin position="1"/>
        <end position="16"/>
    </location>
</feature>
<feature type="compositionally biased region" description="Pro residues" evidence="2">
    <location>
        <begin position="1073"/>
        <end position="1088"/>
    </location>
</feature>
<feature type="compositionally biased region" description="Polar residues" evidence="2">
    <location>
        <begin position="1099"/>
        <end position="1108"/>
    </location>
</feature>
<feature type="compositionally biased region" description="Low complexity" evidence="2">
    <location>
        <begin position="1137"/>
        <end position="1149"/>
    </location>
</feature>
<feature type="compositionally biased region" description="Low complexity" evidence="2">
    <location>
        <begin position="1236"/>
        <end position="1251"/>
    </location>
</feature>
<feature type="compositionally biased region" description="Basic and acidic residues" evidence="2">
    <location>
        <begin position="1373"/>
        <end position="1386"/>
    </location>
</feature>
<feature type="compositionally biased region" description="Low complexity" evidence="2">
    <location>
        <begin position="1507"/>
        <end position="1523"/>
    </location>
</feature>
<feature type="sequence conflict" description="In Ref. 1; AAZ22766." evidence="7" ref="1">
    <original>N</original>
    <variation>S</variation>
    <location>
        <position position="83"/>
    </location>
</feature>
<feature type="sequence conflict" description="In Ref. 1; AAZ22766." evidence="7" ref="1">
    <original>G</original>
    <variation>E</variation>
    <location>
        <position position="88"/>
    </location>
</feature>
<feature type="sequence conflict" description="In Ref. 1; AAZ22766." evidence="7" ref="1">
    <original>N</original>
    <variation>S</variation>
    <location>
        <position position="100"/>
    </location>
</feature>
<feature type="sequence conflict" description="In Ref. 1; AAZ22766." evidence="7" ref="1">
    <original>S</original>
    <variation>F</variation>
    <location>
        <position position="119"/>
    </location>
</feature>
<feature type="sequence conflict" description="In Ref. 1; AAZ22766." evidence="7" ref="1">
    <original>L</original>
    <variation>F</variation>
    <location>
        <position position="186"/>
    </location>
</feature>
<feature type="sequence conflict" description="In Ref. 1; AAZ22766." evidence="7" ref="1">
    <original>G</original>
    <variation>S</variation>
    <location>
        <position position="331"/>
    </location>
</feature>
<feature type="sequence conflict" description="In Ref. 1; AAZ22766." evidence="7" ref="1">
    <original>R</original>
    <variation>K</variation>
    <location>
        <position position="926"/>
    </location>
</feature>
<feature type="sequence conflict" description="In Ref. 1; AAZ22766." evidence="7" ref="1">
    <original>T</original>
    <variation>I</variation>
    <location>
        <position position="1059"/>
    </location>
</feature>
<feature type="sequence conflict" description="In Ref. 1; AAZ22766." evidence="7" ref="1">
    <original>V</original>
    <variation>M</variation>
    <location>
        <position position="1137"/>
    </location>
</feature>
<gene>
    <name type="primary">TALPID3</name>
</gene>
<reference key="1">
    <citation type="journal article" date="2006" name="Genes Dev.">
        <title>The chicken talpid3 gene encodes a novel protein essential for Hedgehog signaling.</title>
        <authorList>
            <person name="Davey M.G."/>
            <person name="Paton I.R."/>
            <person name="Yin Y."/>
            <person name="Schmidt M."/>
            <person name="Bangs F.K."/>
            <person name="Morrice D.R."/>
            <person name="Smith T.G."/>
            <person name="Buxton P."/>
            <person name="Stamataki D."/>
            <person name="Tanaka M."/>
            <person name="Munsterberg A.E."/>
            <person name="Briscoe J."/>
            <person name="Tickle C."/>
            <person name="Burt D.W."/>
        </authorList>
    </citation>
    <scope>NUCLEOTIDE SEQUENCE [MRNA]</scope>
    <scope>TISSUE SPECIFICITY</scope>
    <scope>SUBCELLULAR LOCATION</scope>
    <scope>FUNCTION</scope>
</reference>
<reference key="2">
    <citation type="journal article" date="2004" name="Nature">
        <title>Sequence and comparative analysis of the chicken genome provide unique perspectives on vertebrate evolution.</title>
        <authorList>
            <person name="Hillier L.W."/>
            <person name="Miller W."/>
            <person name="Birney E."/>
            <person name="Warren W."/>
            <person name="Hardison R.C."/>
            <person name="Ponting C.P."/>
            <person name="Bork P."/>
            <person name="Burt D.W."/>
            <person name="Groenen M.A.M."/>
            <person name="Delany M.E."/>
            <person name="Dodgson J.B."/>
            <person name="Chinwalla A.T."/>
            <person name="Cliften P.F."/>
            <person name="Clifton S.W."/>
            <person name="Delehaunty K.D."/>
            <person name="Fronick C."/>
            <person name="Fulton R.S."/>
            <person name="Graves T.A."/>
            <person name="Kremitzki C."/>
            <person name="Layman D."/>
            <person name="Magrini V."/>
            <person name="McPherson J.D."/>
            <person name="Miner T.L."/>
            <person name="Minx P."/>
            <person name="Nash W.E."/>
            <person name="Nhan M.N."/>
            <person name="Nelson J.O."/>
            <person name="Oddy L.G."/>
            <person name="Pohl C.S."/>
            <person name="Randall-Maher J."/>
            <person name="Smith S.M."/>
            <person name="Wallis J.W."/>
            <person name="Yang S.-P."/>
            <person name="Romanov M.N."/>
            <person name="Rondelli C.M."/>
            <person name="Paton B."/>
            <person name="Smith J."/>
            <person name="Morrice D."/>
            <person name="Daniels L."/>
            <person name="Tempest H.G."/>
            <person name="Robertson L."/>
            <person name="Masabanda J.S."/>
            <person name="Griffin D.K."/>
            <person name="Vignal A."/>
            <person name="Fillon V."/>
            <person name="Jacobbson L."/>
            <person name="Kerje S."/>
            <person name="Andersson L."/>
            <person name="Crooijmans R.P."/>
            <person name="Aerts J."/>
            <person name="van der Poel J.J."/>
            <person name="Ellegren H."/>
            <person name="Caldwell R.B."/>
            <person name="Hubbard S.J."/>
            <person name="Grafham D.V."/>
            <person name="Kierzek A.M."/>
            <person name="McLaren S.R."/>
            <person name="Overton I.M."/>
            <person name="Arakawa H."/>
            <person name="Beattie K.J."/>
            <person name="Bezzubov Y."/>
            <person name="Boardman P.E."/>
            <person name="Bonfield J.K."/>
            <person name="Croning M.D.R."/>
            <person name="Davies R.M."/>
            <person name="Francis M.D."/>
            <person name="Humphray S.J."/>
            <person name="Scott C.E."/>
            <person name="Taylor R.G."/>
            <person name="Tickle C."/>
            <person name="Brown W.R.A."/>
            <person name="Rogers J."/>
            <person name="Buerstedde J.-M."/>
            <person name="Wilson S.A."/>
            <person name="Stubbs L."/>
            <person name="Ovcharenko I."/>
            <person name="Gordon L."/>
            <person name="Lucas S."/>
            <person name="Miller M.M."/>
            <person name="Inoko H."/>
            <person name="Shiina T."/>
            <person name="Kaufman J."/>
            <person name="Salomonsen J."/>
            <person name="Skjoedt K."/>
            <person name="Wong G.K.-S."/>
            <person name="Wang J."/>
            <person name="Liu B."/>
            <person name="Wang J."/>
            <person name="Yu J."/>
            <person name="Yang H."/>
            <person name="Nefedov M."/>
            <person name="Koriabine M."/>
            <person name="Dejong P.J."/>
            <person name="Goodstadt L."/>
            <person name="Webber C."/>
            <person name="Dickens N.J."/>
            <person name="Letunic I."/>
            <person name="Suyama M."/>
            <person name="Torrents D."/>
            <person name="von Mering C."/>
            <person name="Zdobnov E.M."/>
            <person name="Makova K."/>
            <person name="Nekrutenko A."/>
            <person name="Elnitski L."/>
            <person name="Eswara P."/>
            <person name="King D.C."/>
            <person name="Yang S.-P."/>
            <person name="Tyekucheva S."/>
            <person name="Radakrishnan A."/>
            <person name="Harris R.S."/>
            <person name="Chiaromonte F."/>
            <person name="Taylor J."/>
            <person name="He J."/>
            <person name="Rijnkels M."/>
            <person name="Griffiths-Jones S."/>
            <person name="Ureta-Vidal A."/>
            <person name="Hoffman M.M."/>
            <person name="Severin J."/>
            <person name="Searle S.M.J."/>
            <person name="Law A.S."/>
            <person name="Speed D."/>
            <person name="Waddington D."/>
            <person name="Cheng Z."/>
            <person name="Tuzun E."/>
            <person name="Eichler E."/>
            <person name="Bao Z."/>
            <person name="Flicek P."/>
            <person name="Shteynberg D.D."/>
            <person name="Brent M.R."/>
            <person name="Bye J.M."/>
            <person name="Huckle E.J."/>
            <person name="Chatterji S."/>
            <person name="Dewey C."/>
            <person name="Pachter L."/>
            <person name="Kouranov A."/>
            <person name="Mourelatos Z."/>
            <person name="Hatzigeorgiou A.G."/>
            <person name="Paterson A.H."/>
            <person name="Ivarie R."/>
            <person name="Brandstrom M."/>
            <person name="Axelsson E."/>
            <person name="Backstrom N."/>
            <person name="Berlin S."/>
            <person name="Webster M.T."/>
            <person name="Pourquie O."/>
            <person name="Reymond A."/>
            <person name="Ucla C."/>
            <person name="Antonarakis S.E."/>
            <person name="Long M."/>
            <person name="Emerson J.J."/>
            <person name="Betran E."/>
            <person name="Dupanloup I."/>
            <person name="Kaessmann H."/>
            <person name="Hinrichs A.S."/>
            <person name="Bejerano G."/>
            <person name="Furey T.S."/>
            <person name="Harte R.A."/>
            <person name="Raney B."/>
            <person name="Siepel A."/>
            <person name="Kent W.J."/>
            <person name="Haussler D."/>
            <person name="Eyras E."/>
            <person name="Castelo R."/>
            <person name="Abril J.F."/>
            <person name="Castellano S."/>
            <person name="Camara F."/>
            <person name="Parra G."/>
            <person name="Guigo R."/>
            <person name="Bourque G."/>
            <person name="Tesler G."/>
            <person name="Pevzner P.A."/>
            <person name="Smit A."/>
            <person name="Fulton L.A."/>
            <person name="Mardis E.R."/>
            <person name="Wilson R.K."/>
        </authorList>
    </citation>
    <scope>NUCLEOTIDE SEQUENCE [LARGE SCALE GENOMIC DNA]</scope>
    <source>
        <strain>Red jungle fowl</strain>
    </source>
</reference>
<reference key="3">
    <citation type="journal article" date="2009" name="Development">
        <title>The Talpid3 gene (KIAA0586) encodes a centrosomal protein that is essential for primary cilia formation.</title>
        <authorList>
            <person name="Yin Y."/>
            <person name="Bangs F."/>
            <person name="Paton I.R."/>
            <person name="Prescott A."/>
            <person name="James J."/>
            <person name="Davey M.G."/>
            <person name="Whitley P."/>
            <person name="Genikhovich G."/>
            <person name="Technau U."/>
            <person name="Burt D.W."/>
            <person name="Tickle C."/>
        </authorList>
    </citation>
    <scope>SUBCELLULAR LOCATION</scope>
    <scope>FUNCTION</scope>
</reference>
<reference key="4">
    <citation type="journal article" date="2013" name="Dev. Dyn.">
        <title>Failure of centrosome migration causes a loss of motile cilia in talpid(3) mutants.</title>
        <authorList>
            <person name="Stephen L.A."/>
            <person name="Davis G.M."/>
            <person name="McTeir K.E."/>
            <person name="James J."/>
            <person name="McTeir L."/>
            <person name="Kierans M."/>
            <person name="Bain A."/>
            <person name="Davey M.G."/>
        </authorList>
    </citation>
    <scope>DISRUPTION PHENOTYPE</scope>
</reference>
<reference key="5">
    <citation type="journal article" date="2015" name="Elife">
        <title>TALPID3 controls centrosome and cell polarity and the human ortholog KIAA0586 is mutated in Joubert syndrome (JBTS23).</title>
        <authorList>
            <person name="Stephen L.A."/>
            <person name="Tawamie H."/>
            <person name="Davis G.M."/>
            <person name="Tebbe L."/>
            <person name="Nuernberg P."/>
            <person name="Nuernberg G."/>
            <person name="Thiele H."/>
            <person name="Thoenes M."/>
            <person name="Boltshauser E."/>
            <person name="Uebe S."/>
            <person name="Rompel O."/>
            <person name="Reis A."/>
            <person name="Ekici A.B."/>
            <person name="McTeir L."/>
            <person name="Fraser A.M."/>
            <person name="Hall E.A."/>
            <person name="Mill P."/>
            <person name="Daudet N."/>
            <person name="Cross C."/>
            <person name="Wolfrum U."/>
            <person name="Jamra R.A."/>
            <person name="Davey M.G."/>
            <person name="Bolz H.J."/>
        </authorList>
    </citation>
    <scope>FUNCTION</scope>
</reference>
<protein>
    <recommendedName>
        <fullName>TALPID3 protein</fullName>
    </recommendedName>
</protein>
<evidence type="ECO:0000255" key="1"/>
<evidence type="ECO:0000256" key="2">
    <source>
        <dbReference type="SAM" id="MobiDB-lite"/>
    </source>
</evidence>
<evidence type="ECO:0000269" key="3">
    <source>
    </source>
</evidence>
<evidence type="ECO:0000269" key="4">
    <source>
    </source>
</evidence>
<evidence type="ECO:0000269" key="5">
    <source>
    </source>
</evidence>
<evidence type="ECO:0000269" key="6">
    <source>
    </source>
</evidence>
<evidence type="ECO:0000305" key="7"/>
<dbReference type="EMBL" id="DQ066932">
    <property type="protein sequence ID" value="AAZ22766.1"/>
    <property type="molecule type" value="mRNA"/>
</dbReference>
<dbReference type="EMBL" id="AC145958">
    <property type="status" value="NOT_ANNOTATED_CDS"/>
    <property type="molecule type" value="Genomic_DNA"/>
</dbReference>
<dbReference type="RefSeq" id="NP_001035797.1">
    <property type="nucleotide sequence ID" value="NM_001040707.1"/>
</dbReference>
<dbReference type="SMR" id="Q1G7G9"/>
<dbReference type="FunCoup" id="Q1G7G9">
    <property type="interactions" value="1953"/>
</dbReference>
<dbReference type="STRING" id="9031.ENSGALP00000036550"/>
<dbReference type="GlyGen" id="Q1G7G9">
    <property type="glycosylation" value="2 sites"/>
</dbReference>
<dbReference type="PaxDb" id="9031-ENSGALP00000036550"/>
<dbReference type="KEGG" id="gga:423540"/>
<dbReference type="CTD" id="423540"/>
<dbReference type="VEuPathDB" id="HostDB:geneid_423540"/>
<dbReference type="eggNOG" id="ENOG502QUXJ">
    <property type="taxonomic scope" value="Eukaryota"/>
</dbReference>
<dbReference type="HOGENOM" id="CLU_004577_0_0_1"/>
<dbReference type="InParanoid" id="Q1G7G9"/>
<dbReference type="OrthoDB" id="10057439at2759"/>
<dbReference type="PhylomeDB" id="Q1G7G9"/>
<dbReference type="PRO" id="PR:Q1G7G9"/>
<dbReference type="Proteomes" id="UP000000539">
    <property type="component" value="Chromosome 5"/>
</dbReference>
<dbReference type="Bgee" id="ENSGALG00000012025">
    <property type="expression patterns" value="Expressed in testis and 12 other cell types or tissues"/>
</dbReference>
<dbReference type="GO" id="GO:0005814">
    <property type="term" value="C:centriole"/>
    <property type="evidence" value="ECO:0000318"/>
    <property type="project" value="GO_Central"/>
</dbReference>
<dbReference type="GO" id="GO:0005813">
    <property type="term" value="C:centrosome"/>
    <property type="evidence" value="ECO:0000314"/>
    <property type="project" value="UniProtKB"/>
</dbReference>
<dbReference type="GO" id="GO:0036064">
    <property type="term" value="C:ciliary basal body"/>
    <property type="evidence" value="ECO:0000318"/>
    <property type="project" value="GO_Central"/>
</dbReference>
<dbReference type="GO" id="GO:0005737">
    <property type="term" value="C:cytoplasm"/>
    <property type="evidence" value="ECO:0000314"/>
    <property type="project" value="UniProtKB"/>
</dbReference>
<dbReference type="GO" id="GO:0051642">
    <property type="term" value="P:centrosome localization"/>
    <property type="evidence" value="ECO:0000315"/>
    <property type="project" value="UniProtKB"/>
</dbReference>
<dbReference type="GO" id="GO:0060271">
    <property type="term" value="P:cilium assembly"/>
    <property type="evidence" value="ECO:0000315"/>
    <property type="project" value="UniProtKB"/>
</dbReference>
<dbReference type="GO" id="GO:0044458">
    <property type="term" value="P:motile cilium assembly"/>
    <property type="evidence" value="ECO:0000315"/>
    <property type="project" value="UniProtKB"/>
</dbReference>
<dbReference type="GO" id="GO:0007224">
    <property type="term" value="P:smoothened signaling pathway"/>
    <property type="evidence" value="ECO:0000315"/>
    <property type="project" value="UniProtKB"/>
</dbReference>
<dbReference type="InterPro" id="IPR029246">
    <property type="entry name" value="TALPID3"/>
</dbReference>
<dbReference type="PANTHER" id="PTHR15721">
    <property type="entry name" value="KIAA0586 PROTEIN"/>
    <property type="match status" value="1"/>
</dbReference>
<dbReference type="PANTHER" id="PTHR15721:SF2">
    <property type="entry name" value="PROTEIN TALPID3"/>
    <property type="match status" value="1"/>
</dbReference>
<dbReference type="Pfam" id="PF15324">
    <property type="entry name" value="TALPID3"/>
    <property type="match status" value="2"/>
</dbReference>
<organism>
    <name type="scientific">Gallus gallus</name>
    <name type="common">Chicken</name>
    <dbReference type="NCBI Taxonomy" id="9031"/>
    <lineage>
        <taxon>Eukaryota</taxon>
        <taxon>Metazoa</taxon>
        <taxon>Chordata</taxon>
        <taxon>Craniata</taxon>
        <taxon>Vertebrata</taxon>
        <taxon>Euteleostomi</taxon>
        <taxon>Archelosauria</taxon>
        <taxon>Archosauria</taxon>
        <taxon>Dinosauria</taxon>
        <taxon>Saurischia</taxon>
        <taxon>Theropoda</taxon>
        <taxon>Coelurosauria</taxon>
        <taxon>Aves</taxon>
        <taxon>Neognathae</taxon>
        <taxon>Galloanserae</taxon>
        <taxon>Galliformes</taxon>
        <taxon>Phasianidae</taxon>
        <taxon>Phasianinae</taxon>
        <taxon>Gallus</taxon>
    </lineage>
</organism>
<comment type="function">
    <text evidence="3 4 6">Required for ciliogenesis and sonic hedgehog/SHH signaling (PubMed:16702409, PubMed:19144723, PubMed:26386247). Independently, involved in regulation of cell intracellular organization. Involved in regulation of cell polarity (PubMed:26386247).</text>
</comment>
<comment type="subcellular location">
    <subcellularLocation>
        <location evidence="3 4">Cytoplasm</location>
        <location evidence="3 4">Cytoskeleton</location>
        <location evidence="3 4">Microtubule organizing center</location>
        <location evidence="3 4">Centrosome</location>
    </subcellularLocation>
</comment>
<comment type="tissue specificity">
    <text evidence="3">Ubiquitously expressed.</text>
</comment>
<comment type="disease">
    <text evidence="3">Defects in Talpid3 are the cause of the spontaneous mutant with pleiotropic phenotype including polydactylous limbs with many unpatterned digits, vascular defects, hypoteleorism, abnormal dorsoventral patterning of the neural tube, loss of endochondral bone formation and embryonic lethality.</text>
</comment>
<comment type="disruption phenotype">
    <text evidence="5">Failure of formation of primary and motile cilia in ependymal cells of the prosencephalic choroid plexus. Centrosomes are rarely found near the cell surface but are often mislocalized deep within the cell and do not show coordinate orientation within group.</text>
</comment>
<comment type="similarity">
    <text evidence="7">Belongs to the TALPID3 family.</text>
</comment>
<proteinExistence type="evidence at transcript level"/>
<name>TALD3_CHICK</name>
<keyword id="KW-0970">Cilium biogenesis/degradation</keyword>
<keyword id="KW-0175">Coiled coil</keyword>
<keyword id="KW-0963">Cytoplasm</keyword>
<keyword id="KW-0206">Cytoskeleton</keyword>
<keyword id="KW-1185">Reference proteome</keyword>
<accession>Q1G7G9</accession>
<accession>F1NQN0</accession>